<organism>
    <name type="scientific">Acidithiobacillus ferrooxidans (strain ATCC 53993 / BNL-5-31)</name>
    <name type="common">Leptospirillum ferrooxidans (ATCC 53993)</name>
    <dbReference type="NCBI Taxonomy" id="380394"/>
    <lineage>
        <taxon>Bacteria</taxon>
        <taxon>Pseudomonadati</taxon>
        <taxon>Pseudomonadota</taxon>
        <taxon>Acidithiobacillia</taxon>
        <taxon>Acidithiobacillales</taxon>
        <taxon>Acidithiobacillaceae</taxon>
        <taxon>Acidithiobacillus</taxon>
    </lineage>
</organism>
<feature type="chain" id="PRO_1000099584" description="Lipoyl synthase">
    <location>
        <begin position="1"/>
        <end position="317"/>
    </location>
</feature>
<feature type="domain" description="Radical SAM core" evidence="2">
    <location>
        <begin position="76"/>
        <end position="293"/>
    </location>
</feature>
<feature type="region of interest" description="Disordered" evidence="3">
    <location>
        <begin position="1"/>
        <end position="28"/>
    </location>
</feature>
<feature type="binding site" evidence="1">
    <location>
        <position position="64"/>
    </location>
    <ligand>
        <name>[4Fe-4S] cluster</name>
        <dbReference type="ChEBI" id="CHEBI:49883"/>
        <label>1</label>
    </ligand>
</feature>
<feature type="binding site" evidence="1">
    <location>
        <position position="69"/>
    </location>
    <ligand>
        <name>[4Fe-4S] cluster</name>
        <dbReference type="ChEBI" id="CHEBI:49883"/>
        <label>1</label>
    </ligand>
</feature>
<feature type="binding site" evidence="1">
    <location>
        <position position="75"/>
    </location>
    <ligand>
        <name>[4Fe-4S] cluster</name>
        <dbReference type="ChEBI" id="CHEBI:49883"/>
        <label>1</label>
    </ligand>
</feature>
<feature type="binding site" evidence="1">
    <location>
        <position position="90"/>
    </location>
    <ligand>
        <name>[4Fe-4S] cluster</name>
        <dbReference type="ChEBI" id="CHEBI:49883"/>
        <label>2</label>
        <note>4Fe-4S-S-AdoMet</note>
    </ligand>
</feature>
<feature type="binding site" evidence="1">
    <location>
        <position position="94"/>
    </location>
    <ligand>
        <name>[4Fe-4S] cluster</name>
        <dbReference type="ChEBI" id="CHEBI:49883"/>
        <label>2</label>
        <note>4Fe-4S-S-AdoMet</note>
    </ligand>
</feature>
<feature type="binding site" evidence="1">
    <location>
        <position position="97"/>
    </location>
    <ligand>
        <name>[4Fe-4S] cluster</name>
        <dbReference type="ChEBI" id="CHEBI:49883"/>
        <label>2</label>
        <note>4Fe-4S-S-AdoMet</note>
    </ligand>
</feature>
<feature type="binding site" evidence="1">
    <location>
        <position position="304"/>
    </location>
    <ligand>
        <name>[4Fe-4S] cluster</name>
        <dbReference type="ChEBI" id="CHEBI:49883"/>
        <label>1</label>
    </ligand>
</feature>
<proteinExistence type="inferred from homology"/>
<reference key="1">
    <citation type="submission" date="2008-08" db="EMBL/GenBank/DDBJ databases">
        <title>Complete sequence of Acidithiobacillus ferrooxidans ATCC 53993.</title>
        <authorList>
            <person name="Lucas S."/>
            <person name="Copeland A."/>
            <person name="Lapidus A."/>
            <person name="Glavina del Rio T."/>
            <person name="Dalin E."/>
            <person name="Tice H."/>
            <person name="Bruce D."/>
            <person name="Goodwin L."/>
            <person name="Pitluck S."/>
            <person name="Sims D."/>
            <person name="Brettin T."/>
            <person name="Detter J.C."/>
            <person name="Han C."/>
            <person name="Kuske C.R."/>
            <person name="Larimer F."/>
            <person name="Land M."/>
            <person name="Hauser L."/>
            <person name="Kyrpides N."/>
            <person name="Lykidis A."/>
            <person name="Borole A.P."/>
        </authorList>
    </citation>
    <scope>NUCLEOTIDE SEQUENCE [LARGE SCALE GENOMIC DNA]</scope>
    <source>
        <strain>ATCC 53993 / BNL-5-31</strain>
    </source>
</reference>
<protein>
    <recommendedName>
        <fullName evidence="1">Lipoyl synthase</fullName>
        <ecNumber evidence="1">2.8.1.8</ecNumber>
    </recommendedName>
    <alternativeName>
        <fullName evidence="1">Lip-syn</fullName>
        <shortName evidence="1">LS</shortName>
    </alternativeName>
    <alternativeName>
        <fullName evidence="1">Lipoate synthase</fullName>
    </alternativeName>
    <alternativeName>
        <fullName evidence="1">Lipoic acid synthase</fullName>
    </alternativeName>
    <alternativeName>
        <fullName evidence="1">Sulfur insertion protein LipA</fullName>
    </alternativeName>
</protein>
<sequence length="317" mass="35148">MDSQPQSKKAARGADKTARNPIPIIPAPTERLPKPQWLRVRSPLSPEVDQLKKILRDAALHTVCEEASCPNLGECFGGGTATFMILGDICTRRCPFCDVAHGRPEAPDPLESVHLARTVASMKLRFVVITSVDRDDLRDGGARHFAEVISALREHCPELHVEILVPDFRGRVANALAAFRETPPDVFNHNLETVPRLYLQARPGADYHHSLQLLAAFKAQHPQIPTKSGLMLGLGEEIDEIRGVMRDLRQAGCELLTIGQYLAPSRHHLPVARFVPPEEFQQLQRDGMAMGFRHVASGPLVRSSYHAERSFHEIGGD</sequence>
<accession>B5EMR4</accession>
<name>LIPA_ACIF5</name>
<keyword id="KW-0004">4Fe-4S</keyword>
<keyword id="KW-0963">Cytoplasm</keyword>
<keyword id="KW-0408">Iron</keyword>
<keyword id="KW-0411">Iron-sulfur</keyword>
<keyword id="KW-0479">Metal-binding</keyword>
<keyword id="KW-0949">S-adenosyl-L-methionine</keyword>
<keyword id="KW-0808">Transferase</keyword>
<evidence type="ECO:0000255" key="1">
    <source>
        <dbReference type="HAMAP-Rule" id="MF_00206"/>
    </source>
</evidence>
<evidence type="ECO:0000255" key="2">
    <source>
        <dbReference type="PROSITE-ProRule" id="PRU01266"/>
    </source>
</evidence>
<evidence type="ECO:0000256" key="3">
    <source>
        <dbReference type="SAM" id="MobiDB-lite"/>
    </source>
</evidence>
<dbReference type="EC" id="2.8.1.8" evidence="1"/>
<dbReference type="EMBL" id="CP001132">
    <property type="protein sequence ID" value="ACH84403.1"/>
    <property type="molecule type" value="Genomic_DNA"/>
</dbReference>
<dbReference type="RefSeq" id="WP_012537264.1">
    <property type="nucleotide sequence ID" value="NC_011206.1"/>
</dbReference>
<dbReference type="SMR" id="B5EMR4"/>
<dbReference type="GeneID" id="65281623"/>
<dbReference type="KEGG" id="afe:Lferr_2200"/>
<dbReference type="eggNOG" id="COG0320">
    <property type="taxonomic scope" value="Bacteria"/>
</dbReference>
<dbReference type="HOGENOM" id="CLU_033144_2_1_6"/>
<dbReference type="UniPathway" id="UPA00538">
    <property type="reaction ID" value="UER00593"/>
</dbReference>
<dbReference type="GO" id="GO:0005737">
    <property type="term" value="C:cytoplasm"/>
    <property type="evidence" value="ECO:0007669"/>
    <property type="project" value="UniProtKB-SubCell"/>
</dbReference>
<dbReference type="GO" id="GO:0051539">
    <property type="term" value="F:4 iron, 4 sulfur cluster binding"/>
    <property type="evidence" value="ECO:0007669"/>
    <property type="project" value="UniProtKB-UniRule"/>
</dbReference>
<dbReference type="GO" id="GO:0016992">
    <property type="term" value="F:lipoate synthase activity"/>
    <property type="evidence" value="ECO:0007669"/>
    <property type="project" value="UniProtKB-UniRule"/>
</dbReference>
<dbReference type="GO" id="GO:0046872">
    <property type="term" value="F:metal ion binding"/>
    <property type="evidence" value="ECO:0007669"/>
    <property type="project" value="UniProtKB-KW"/>
</dbReference>
<dbReference type="CDD" id="cd01335">
    <property type="entry name" value="Radical_SAM"/>
    <property type="match status" value="1"/>
</dbReference>
<dbReference type="FunFam" id="3.20.20.70:FF:000040">
    <property type="entry name" value="Lipoyl synthase"/>
    <property type="match status" value="1"/>
</dbReference>
<dbReference type="Gene3D" id="3.20.20.70">
    <property type="entry name" value="Aldolase class I"/>
    <property type="match status" value="1"/>
</dbReference>
<dbReference type="HAMAP" id="MF_00206">
    <property type="entry name" value="Lipoyl_synth"/>
    <property type="match status" value="1"/>
</dbReference>
<dbReference type="InterPro" id="IPR013785">
    <property type="entry name" value="Aldolase_TIM"/>
</dbReference>
<dbReference type="InterPro" id="IPR006638">
    <property type="entry name" value="Elp3/MiaA/NifB-like_rSAM"/>
</dbReference>
<dbReference type="InterPro" id="IPR031691">
    <property type="entry name" value="LIAS_N"/>
</dbReference>
<dbReference type="InterPro" id="IPR003698">
    <property type="entry name" value="Lipoyl_synth"/>
</dbReference>
<dbReference type="InterPro" id="IPR007197">
    <property type="entry name" value="rSAM"/>
</dbReference>
<dbReference type="NCBIfam" id="TIGR00510">
    <property type="entry name" value="lipA"/>
    <property type="match status" value="1"/>
</dbReference>
<dbReference type="NCBIfam" id="NF004019">
    <property type="entry name" value="PRK05481.1"/>
    <property type="match status" value="1"/>
</dbReference>
<dbReference type="NCBIfam" id="NF009544">
    <property type="entry name" value="PRK12928.1"/>
    <property type="match status" value="1"/>
</dbReference>
<dbReference type="PANTHER" id="PTHR10949">
    <property type="entry name" value="LIPOYL SYNTHASE"/>
    <property type="match status" value="1"/>
</dbReference>
<dbReference type="PANTHER" id="PTHR10949:SF0">
    <property type="entry name" value="LIPOYL SYNTHASE, MITOCHONDRIAL"/>
    <property type="match status" value="1"/>
</dbReference>
<dbReference type="Pfam" id="PF16881">
    <property type="entry name" value="LIAS_N"/>
    <property type="match status" value="1"/>
</dbReference>
<dbReference type="Pfam" id="PF04055">
    <property type="entry name" value="Radical_SAM"/>
    <property type="match status" value="1"/>
</dbReference>
<dbReference type="PIRSF" id="PIRSF005963">
    <property type="entry name" value="Lipoyl_synth"/>
    <property type="match status" value="1"/>
</dbReference>
<dbReference type="SFLD" id="SFLDF00271">
    <property type="entry name" value="lipoyl_synthase"/>
    <property type="match status" value="1"/>
</dbReference>
<dbReference type="SFLD" id="SFLDS00029">
    <property type="entry name" value="Radical_SAM"/>
    <property type="match status" value="1"/>
</dbReference>
<dbReference type="SMART" id="SM00729">
    <property type="entry name" value="Elp3"/>
    <property type="match status" value="1"/>
</dbReference>
<dbReference type="SUPFAM" id="SSF102114">
    <property type="entry name" value="Radical SAM enzymes"/>
    <property type="match status" value="1"/>
</dbReference>
<dbReference type="PROSITE" id="PS51918">
    <property type="entry name" value="RADICAL_SAM"/>
    <property type="match status" value="1"/>
</dbReference>
<gene>
    <name evidence="1" type="primary">lipA</name>
    <name type="ordered locus">Lferr_2200</name>
</gene>
<comment type="function">
    <text evidence="1">Catalyzes the radical-mediated insertion of two sulfur atoms into the C-6 and C-8 positions of the octanoyl moiety bound to the lipoyl domains of lipoate-dependent enzymes, thereby converting the octanoylated domains into lipoylated derivatives.</text>
</comment>
<comment type="catalytic activity">
    <reaction evidence="1">
        <text>[[Fe-S] cluster scaffold protein carrying a second [4Fe-4S](2+) cluster] + N(6)-octanoyl-L-lysyl-[protein] + 2 oxidized [2Fe-2S]-[ferredoxin] + 2 S-adenosyl-L-methionine + 4 H(+) = [[Fe-S] cluster scaffold protein] + N(6)-[(R)-dihydrolipoyl]-L-lysyl-[protein] + 4 Fe(3+) + 2 hydrogen sulfide + 2 5'-deoxyadenosine + 2 L-methionine + 2 reduced [2Fe-2S]-[ferredoxin]</text>
        <dbReference type="Rhea" id="RHEA:16585"/>
        <dbReference type="Rhea" id="RHEA-COMP:9928"/>
        <dbReference type="Rhea" id="RHEA-COMP:10000"/>
        <dbReference type="Rhea" id="RHEA-COMP:10001"/>
        <dbReference type="Rhea" id="RHEA-COMP:10475"/>
        <dbReference type="Rhea" id="RHEA-COMP:14568"/>
        <dbReference type="Rhea" id="RHEA-COMP:14569"/>
        <dbReference type="ChEBI" id="CHEBI:15378"/>
        <dbReference type="ChEBI" id="CHEBI:17319"/>
        <dbReference type="ChEBI" id="CHEBI:29034"/>
        <dbReference type="ChEBI" id="CHEBI:29919"/>
        <dbReference type="ChEBI" id="CHEBI:33722"/>
        <dbReference type="ChEBI" id="CHEBI:33737"/>
        <dbReference type="ChEBI" id="CHEBI:33738"/>
        <dbReference type="ChEBI" id="CHEBI:57844"/>
        <dbReference type="ChEBI" id="CHEBI:59789"/>
        <dbReference type="ChEBI" id="CHEBI:78809"/>
        <dbReference type="ChEBI" id="CHEBI:83100"/>
        <dbReference type="EC" id="2.8.1.8"/>
    </reaction>
</comment>
<comment type="cofactor">
    <cofactor evidence="1">
        <name>[4Fe-4S] cluster</name>
        <dbReference type="ChEBI" id="CHEBI:49883"/>
    </cofactor>
    <text evidence="1">Binds 2 [4Fe-4S] clusters per subunit. One cluster is coordinated with 3 cysteines and an exchangeable S-adenosyl-L-methionine.</text>
</comment>
<comment type="pathway">
    <text evidence="1">Protein modification; protein lipoylation via endogenous pathway; protein N(6)-(lipoyl)lysine from octanoyl-[acyl-carrier-protein]: step 2/2.</text>
</comment>
<comment type="subcellular location">
    <subcellularLocation>
        <location evidence="1">Cytoplasm</location>
    </subcellularLocation>
</comment>
<comment type="similarity">
    <text evidence="1">Belongs to the radical SAM superfamily. Lipoyl synthase family.</text>
</comment>